<proteinExistence type="inferred from homology"/>
<sequence length="127" mass="14438">MKIVVTSIFVQDQDMALEFYTEKLGFIKKEDVPMGKFRWITLVSPDDQDGTELLLEPNEHPAAKEYQKKIFSEGLPATMFGVADIQKEYNRLKEKGVTFTTEPTKMGEVTIAVFDDTCGNLIQIVQK</sequence>
<reference key="1">
    <citation type="journal article" date="1997" name="Nature">
        <title>The complete genome sequence of the Gram-positive bacterium Bacillus subtilis.</title>
        <authorList>
            <person name="Kunst F."/>
            <person name="Ogasawara N."/>
            <person name="Moszer I."/>
            <person name="Albertini A.M."/>
            <person name="Alloni G."/>
            <person name="Azevedo V."/>
            <person name="Bertero M.G."/>
            <person name="Bessieres P."/>
            <person name="Bolotin A."/>
            <person name="Borchert S."/>
            <person name="Borriss R."/>
            <person name="Boursier L."/>
            <person name="Brans A."/>
            <person name="Braun M."/>
            <person name="Brignell S.C."/>
            <person name="Bron S."/>
            <person name="Brouillet S."/>
            <person name="Bruschi C.V."/>
            <person name="Caldwell B."/>
            <person name="Capuano V."/>
            <person name="Carter N.M."/>
            <person name="Choi S.-K."/>
            <person name="Codani J.-J."/>
            <person name="Connerton I.F."/>
            <person name="Cummings N.J."/>
            <person name="Daniel R.A."/>
            <person name="Denizot F."/>
            <person name="Devine K.M."/>
            <person name="Duesterhoeft A."/>
            <person name="Ehrlich S.D."/>
            <person name="Emmerson P.T."/>
            <person name="Entian K.-D."/>
            <person name="Errington J."/>
            <person name="Fabret C."/>
            <person name="Ferrari E."/>
            <person name="Foulger D."/>
            <person name="Fritz C."/>
            <person name="Fujita M."/>
            <person name="Fujita Y."/>
            <person name="Fuma S."/>
            <person name="Galizzi A."/>
            <person name="Galleron N."/>
            <person name="Ghim S.-Y."/>
            <person name="Glaser P."/>
            <person name="Goffeau A."/>
            <person name="Golightly E.J."/>
            <person name="Grandi G."/>
            <person name="Guiseppi G."/>
            <person name="Guy B.J."/>
            <person name="Haga K."/>
            <person name="Haiech J."/>
            <person name="Harwood C.R."/>
            <person name="Henaut A."/>
            <person name="Hilbert H."/>
            <person name="Holsappel S."/>
            <person name="Hosono S."/>
            <person name="Hullo M.-F."/>
            <person name="Itaya M."/>
            <person name="Jones L.-M."/>
            <person name="Joris B."/>
            <person name="Karamata D."/>
            <person name="Kasahara Y."/>
            <person name="Klaerr-Blanchard M."/>
            <person name="Klein C."/>
            <person name="Kobayashi Y."/>
            <person name="Koetter P."/>
            <person name="Koningstein G."/>
            <person name="Krogh S."/>
            <person name="Kumano M."/>
            <person name="Kurita K."/>
            <person name="Lapidus A."/>
            <person name="Lardinois S."/>
            <person name="Lauber J."/>
            <person name="Lazarevic V."/>
            <person name="Lee S.-M."/>
            <person name="Levine A."/>
            <person name="Liu H."/>
            <person name="Masuda S."/>
            <person name="Mauel C."/>
            <person name="Medigue C."/>
            <person name="Medina N."/>
            <person name="Mellado R.P."/>
            <person name="Mizuno M."/>
            <person name="Moestl D."/>
            <person name="Nakai S."/>
            <person name="Noback M."/>
            <person name="Noone D."/>
            <person name="O'Reilly M."/>
            <person name="Ogawa K."/>
            <person name="Ogiwara A."/>
            <person name="Oudega B."/>
            <person name="Park S.-H."/>
            <person name="Parro V."/>
            <person name="Pohl T.M."/>
            <person name="Portetelle D."/>
            <person name="Porwollik S."/>
            <person name="Prescott A.M."/>
            <person name="Presecan E."/>
            <person name="Pujic P."/>
            <person name="Purnelle B."/>
            <person name="Rapoport G."/>
            <person name="Rey M."/>
            <person name="Reynolds S."/>
            <person name="Rieger M."/>
            <person name="Rivolta C."/>
            <person name="Rocha E."/>
            <person name="Roche B."/>
            <person name="Rose M."/>
            <person name="Sadaie Y."/>
            <person name="Sato T."/>
            <person name="Scanlan E."/>
            <person name="Schleich S."/>
            <person name="Schroeter R."/>
            <person name="Scoffone F."/>
            <person name="Sekiguchi J."/>
            <person name="Sekowska A."/>
            <person name="Seror S.J."/>
            <person name="Serror P."/>
            <person name="Shin B.-S."/>
            <person name="Soldo B."/>
            <person name="Sorokin A."/>
            <person name="Tacconi E."/>
            <person name="Takagi T."/>
            <person name="Takahashi H."/>
            <person name="Takemaru K."/>
            <person name="Takeuchi M."/>
            <person name="Tamakoshi A."/>
            <person name="Tanaka T."/>
            <person name="Terpstra P."/>
            <person name="Tognoni A."/>
            <person name="Tosato V."/>
            <person name="Uchiyama S."/>
            <person name="Vandenbol M."/>
            <person name="Vannier F."/>
            <person name="Vassarotti A."/>
            <person name="Viari A."/>
            <person name="Wambutt R."/>
            <person name="Wedler E."/>
            <person name="Wedler H."/>
            <person name="Weitzenegger T."/>
            <person name="Winters P."/>
            <person name="Wipat A."/>
            <person name="Yamamoto H."/>
            <person name="Yamane K."/>
            <person name="Yasumoto K."/>
            <person name="Yata K."/>
            <person name="Yoshida K."/>
            <person name="Yoshikawa H.-F."/>
            <person name="Zumstein E."/>
            <person name="Yoshikawa H."/>
            <person name="Danchin A."/>
        </authorList>
    </citation>
    <scope>NUCLEOTIDE SEQUENCE [LARGE SCALE GENOMIC DNA]</scope>
    <source>
        <strain>168</strain>
    </source>
</reference>
<evidence type="ECO:0000255" key="1">
    <source>
        <dbReference type="PROSITE-ProRule" id="PRU01163"/>
    </source>
</evidence>
<evidence type="ECO:0000305" key="2"/>
<keyword id="KW-0456">Lyase</keyword>
<keyword id="KW-1185">Reference proteome</keyword>
<comment type="similarity">
    <text evidence="2">Belongs to the glyoxalase I family.</text>
</comment>
<name>YURT_BACSU</name>
<accession>O32161</accession>
<protein>
    <recommendedName>
        <fullName>Uncharacterized protein YurT</fullName>
    </recommendedName>
</protein>
<feature type="chain" id="PRO_0000382692" description="Uncharacterized protein YurT">
    <location>
        <begin position="1"/>
        <end position="127"/>
    </location>
</feature>
<feature type="domain" description="VOC" evidence="1">
    <location>
        <begin position="1"/>
        <end position="127"/>
    </location>
</feature>
<organism>
    <name type="scientific">Bacillus subtilis (strain 168)</name>
    <dbReference type="NCBI Taxonomy" id="224308"/>
    <lineage>
        <taxon>Bacteria</taxon>
        <taxon>Bacillati</taxon>
        <taxon>Bacillota</taxon>
        <taxon>Bacilli</taxon>
        <taxon>Bacillales</taxon>
        <taxon>Bacillaceae</taxon>
        <taxon>Bacillus</taxon>
    </lineage>
</organism>
<gene>
    <name type="primary">yurT</name>
    <name type="ordered locus">BSU32660</name>
</gene>
<dbReference type="EMBL" id="AL009126">
    <property type="protein sequence ID" value="CAB15255.1"/>
    <property type="molecule type" value="Genomic_DNA"/>
</dbReference>
<dbReference type="PIR" id="C70019">
    <property type="entry name" value="C70019"/>
</dbReference>
<dbReference type="SMR" id="O32161"/>
<dbReference type="FunCoup" id="O32161">
    <property type="interactions" value="130"/>
</dbReference>
<dbReference type="STRING" id="224308.BSU32660"/>
<dbReference type="PaxDb" id="224308-BSU32660"/>
<dbReference type="EnsemblBacteria" id="CAB15255">
    <property type="protein sequence ID" value="CAB15255"/>
    <property type="gene ID" value="BSU_32660"/>
</dbReference>
<dbReference type="GeneID" id="937193"/>
<dbReference type="KEGG" id="bsu:BSU32660"/>
<dbReference type="PATRIC" id="fig|224308.179.peg.3536"/>
<dbReference type="eggNOG" id="COG0346">
    <property type="taxonomic scope" value="Bacteria"/>
</dbReference>
<dbReference type="InParanoid" id="O32161"/>
<dbReference type="OrthoDB" id="9794917at2"/>
<dbReference type="PhylomeDB" id="O32161"/>
<dbReference type="BioCyc" id="BSUB:BSU32660-MONOMER"/>
<dbReference type="Proteomes" id="UP000001570">
    <property type="component" value="Chromosome"/>
</dbReference>
<dbReference type="GO" id="GO:0016829">
    <property type="term" value="F:lyase activity"/>
    <property type="evidence" value="ECO:0007669"/>
    <property type="project" value="UniProtKB-KW"/>
</dbReference>
<dbReference type="GO" id="GO:0004493">
    <property type="term" value="F:methylmalonyl-CoA epimerase activity"/>
    <property type="evidence" value="ECO:0000318"/>
    <property type="project" value="GO_Central"/>
</dbReference>
<dbReference type="GO" id="GO:0046491">
    <property type="term" value="P:L-methylmalonyl-CoA metabolic process"/>
    <property type="evidence" value="ECO:0000318"/>
    <property type="project" value="GO_Central"/>
</dbReference>
<dbReference type="CDD" id="cd07263">
    <property type="entry name" value="VOC_like"/>
    <property type="match status" value="1"/>
</dbReference>
<dbReference type="Gene3D" id="3.10.180.10">
    <property type="entry name" value="2,3-Dihydroxybiphenyl 1,2-Dioxygenase, domain 1"/>
    <property type="match status" value="1"/>
</dbReference>
<dbReference type="InterPro" id="IPR029068">
    <property type="entry name" value="Glyas_Bleomycin-R_OHBP_Dase"/>
</dbReference>
<dbReference type="InterPro" id="IPR004360">
    <property type="entry name" value="Glyas_Fos-R_dOase_dom"/>
</dbReference>
<dbReference type="InterPro" id="IPR037523">
    <property type="entry name" value="VOC"/>
</dbReference>
<dbReference type="PANTHER" id="PTHR36437">
    <property type="entry name" value="GLYOXALASE/BLEOMYCIN RESISTANCE PROTEIN/DIOXYGENASE"/>
    <property type="match status" value="1"/>
</dbReference>
<dbReference type="PANTHER" id="PTHR36437:SF2">
    <property type="entry name" value="GLYOXALASE_BLEOMYCIN RESISTANCE PROTEIN_DIOXYGENASE"/>
    <property type="match status" value="1"/>
</dbReference>
<dbReference type="Pfam" id="PF00903">
    <property type="entry name" value="Glyoxalase"/>
    <property type="match status" value="1"/>
</dbReference>
<dbReference type="SUPFAM" id="SSF54593">
    <property type="entry name" value="Glyoxalase/Bleomycin resistance protein/Dihydroxybiphenyl dioxygenase"/>
    <property type="match status" value="1"/>
</dbReference>
<dbReference type="PROSITE" id="PS51819">
    <property type="entry name" value="VOC"/>
    <property type="match status" value="1"/>
</dbReference>